<sequence length="173" mass="20226">MGKPCHFAQFDLQPTFLVDLDELGRRYRELVRSVHPDRFADAPEREQRLALERAAQLNDAYQTLKSAPRRALYLLTLNGRELPLEATVQDPEFLLQQMQLREELEELQDSADLAGVATFKRQLKAAQAELEGEFAACWDDARRREEAERLVRRMQFLDKLAQEVRQLEERLDD</sequence>
<feature type="chain" id="PRO_1000083017" description="Co-chaperone protein HscB homolog">
    <location>
        <begin position="1"/>
        <end position="173"/>
    </location>
</feature>
<feature type="domain" description="J" evidence="1">
    <location>
        <begin position="5"/>
        <end position="77"/>
    </location>
</feature>
<organism>
    <name type="scientific">Pseudomonas paraeruginosa (strain DSM 24068 / PA7)</name>
    <name type="common">Pseudomonas aeruginosa (strain PA7)</name>
    <dbReference type="NCBI Taxonomy" id="381754"/>
    <lineage>
        <taxon>Bacteria</taxon>
        <taxon>Pseudomonadati</taxon>
        <taxon>Pseudomonadota</taxon>
        <taxon>Gammaproteobacteria</taxon>
        <taxon>Pseudomonadales</taxon>
        <taxon>Pseudomonadaceae</taxon>
        <taxon>Pseudomonas</taxon>
        <taxon>Pseudomonas paraeruginosa</taxon>
    </lineage>
</organism>
<evidence type="ECO:0000255" key="1">
    <source>
        <dbReference type="HAMAP-Rule" id="MF_00682"/>
    </source>
</evidence>
<gene>
    <name evidence="1" type="primary">hscB</name>
    <name type="ordered locus">PSPA7_1302</name>
</gene>
<name>HSCB_PSEP7</name>
<dbReference type="EMBL" id="CP000744">
    <property type="protein sequence ID" value="ABR83035.1"/>
    <property type="molecule type" value="Genomic_DNA"/>
</dbReference>
<dbReference type="RefSeq" id="WP_003150716.1">
    <property type="nucleotide sequence ID" value="NC_009656.1"/>
</dbReference>
<dbReference type="SMR" id="A6V0V1"/>
<dbReference type="KEGG" id="pap:PSPA7_1302"/>
<dbReference type="HOGENOM" id="CLU_068529_2_0_6"/>
<dbReference type="Proteomes" id="UP000001582">
    <property type="component" value="Chromosome"/>
</dbReference>
<dbReference type="GO" id="GO:1990230">
    <property type="term" value="C:iron-sulfur cluster transfer complex"/>
    <property type="evidence" value="ECO:0007669"/>
    <property type="project" value="TreeGrafter"/>
</dbReference>
<dbReference type="GO" id="GO:0001671">
    <property type="term" value="F:ATPase activator activity"/>
    <property type="evidence" value="ECO:0007669"/>
    <property type="project" value="InterPro"/>
</dbReference>
<dbReference type="GO" id="GO:0051087">
    <property type="term" value="F:protein-folding chaperone binding"/>
    <property type="evidence" value="ECO:0007669"/>
    <property type="project" value="InterPro"/>
</dbReference>
<dbReference type="GO" id="GO:0044571">
    <property type="term" value="P:[2Fe-2S] cluster assembly"/>
    <property type="evidence" value="ECO:0007669"/>
    <property type="project" value="InterPro"/>
</dbReference>
<dbReference type="GO" id="GO:0051259">
    <property type="term" value="P:protein complex oligomerization"/>
    <property type="evidence" value="ECO:0007669"/>
    <property type="project" value="InterPro"/>
</dbReference>
<dbReference type="GO" id="GO:0006457">
    <property type="term" value="P:protein folding"/>
    <property type="evidence" value="ECO:0007669"/>
    <property type="project" value="UniProtKB-UniRule"/>
</dbReference>
<dbReference type="CDD" id="cd06257">
    <property type="entry name" value="DnaJ"/>
    <property type="match status" value="1"/>
</dbReference>
<dbReference type="FunFam" id="1.20.1280.20:FF:000005">
    <property type="entry name" value="Co-chaperone protein HscB homolog"/>
    <property type="match status" value="1"/>
</dbReference>
<dbReference type="Gene3D" id="1.10.287.110">
    <property type="entry name" value="DnaJ domain"/>
    <property type="match status" value="1"/>
</dbReference>
<dbReference type="Gene3D" id="1.20.1280.20">
    <property type="entry name" value="HscB, C-terminal domain"/>
    <property type="match status" value="1"/>
</dbReference>
<dbReference type="HAMAP" id="MF_00682">
    <property type="entry name" value="HscB"/>
    <property type="match status" value="1"/>
</dbReference>
<dbReference type="InterPro" id="IPR001623">
    <property type="entry name" value="DnaJ_domain"/>
</dbReference>
<dbReference type="InterPro" id="IPR004640">
    <property type="entry name" value="HscB"/>
</dbReference>
<dbReference type="InterPro" id="IPR036386">
    <property type="entry name" value="HscB_C_sf"/>
</dbReference>
<dbReference type="InterPro" id="IPR009073">
    <property type="entry name" value="HscB_oligo_C"/>
</dbReference>
<dbReference type="InterPro" id="IPR036869">
    <property type="entry name" value="J_dom_sf"/>
</dbReference>
<dbReference type="NCBIfam" id="TIGR00714">
    <property type="entry name" value="hscB"/>
    <property type="match status" value="1"/>
</dbReference>
<dbReference type="NCBIfam" id="NF001420">
    <property type="entry name" value="PRK00294.1"/>
    <property type="match status" value="1"/>
</dbReference>
<dbReference type="PANTHER" id="PTHR14021">
    <property type="entry name" value="IRON-SULFUR CLUSTER CO-CHAPERONE PROTEIN HSCB"/>
    <property type="match status" value="1"/>
</dbReference>
<dbReference type="PANTHER" id="PTHR14021:SF15">
    <property type="entry name" value="IRON-SULFUR CLUSTER CO-CHAPERONE PROTEIN HSCB"/>
    <property type="match status" value="1"/>
</dbReference>
<dbReference type="Pfam" id="PF00226">
    <property type="entry name" value="DnaJ"/>
    <property type="match status" value="1"/>
</dbReference>
<dbReference type="Pfam" id="PF07743">
    <property type="entry name" value="HSCB_C"/>
    <property type="match status" value="1"/>
</dbReference>
<dbReference type="SMART" id="SM00271">
    <property type="entry name" value="DnaJ"/>
    <property type="match status" value="1"/>
</dbReference>
<dbReference type="SUPFAM" id="SSF46565">
    <property type="entry name" value="Chaperone J-domain"/>
    <property type="match status" value="1"/>
</dbReference>
<dbReference type="SUPFAM" id="SSF47144">
    <property type="entry name" value="HSC20 (HSCB), C-terminal oligomerisation domain"/>
    <property type="match status" value="1"/>
</dbReference>
<dbReference type="PROSITE" id="PS50076">
    <property type="entry name" value="DNAJ_2"/>
    <property type="match status" value="1"/>
</dbReference>
<reference key="1">
    <citation type="submission" date="2007-06" db="EMBL/GenBank/DDBJ databases">
        <authorList>
            <person name="Dodson R.J."/>
            <person name="Harkins D."/>
            <person name="Paulsen I.T."/>
        </authorList>
    </citation>
    <scope>NUCLEOTIDE SEQUENCE [LARGE SCALE GENOMIC DNA]</scope>
    <source>
        <strain>DSM 24068 / PA7</strain>
    </source>
</reference>
<comment type="function">
    <text evidence="1">Co-chaperone involved in the maturation of iron-sulfur cluster-containing proteins. Seems to help targeting proteins to be folded toward HscA.</text>
</comment>
<comment type="subunit">
    <text evidence="1">Interacts with HscA and stimulates its ATPase activity.</text>
</comment>
<comment type="similarity">
    <text evidence="1">Belongs to the HscB family.</text>
</comment>
<proteinExistence type="inferred from homology"/>
<protein>
    <recommendedName>
        <fullName evidence="1">Co-chaperone protein HscB homolog</fullName>
    </recommendedName>
</protein>
<accession>A6V0V1</accession>
<keyword id="KW-0143">Chaperone</keyword>